<protein>
    <recommendedName>
        <fullName evidence="8">Photosystem I chlorophyll a/b-binding protein 6, chloroplastic</fullName>
    </recommendedName>
    <alternativeName>
        <fullName evidence="9">LHCI type III LHCA6</fullName>
    </alternativeName>
</protein>
<accession>Q8LCQ4</accession>
<accession>Q43382</accession>
<accession>Q84WT1</accession>
<accession>Q9LMB1</accession>
<proteinExistence type="evidence at protein level"/>
<name>LHCA6_ARATH</name>
<keyword id="KW-0002">3D-structure</keyword>
<keyword id="KW-0148">Chlorophyll</keyword>
<keyword id="KW-0150">Chloroplast</keyword>
<keyword id="KW-0157">Chromophore</keyword>
<keyword id="KW-0460">Magnesium</keyword>
<keyword id="KW-0472">Membrane</keyword>
<keyword id="KW-0479">Metal-binding</keyword>
<keyword id="KW-0602">Photosynthesis</keyword>
<keyword id="KW-0603">Photosystem I</keyword>
<keyword id="KW-0934">Plastid</keyword>
<keyword id="KW-1185">Reference proteome</keyword>
<keyword id="KW-0793">Thylakoid</keyword>
<keyword id="KW-0809">Transit peptide</keyword>
<keyword id="KW-0812">Transmembrane</keyword>
<keyword id="KW-1133">Transmembrane helix</keyword>
<dbReference type="EMBL" id="U03395">
    <property type="protein sequence ID" value="AAA57542.1"/>
    <property type="molecule type" value="mRNA"/>
</dbReference>
<dbReference type="EMBL" id="AC069143">
    <property type="protein sequence ID" value="AAF82226.1"/>
    <property type="status" value="ALT_SEQ"/>
    <property type="molecule type" value="Genomic_DNA"/>
</dbReference>
<dbReference type="EMBL" id="CP002684">
    <property type="protein sequence ID" value="AEE29811.1"/>
    <property type="molecule type" value="Genomic_DNA"/>
</dbReference>
<dbReference type="EMBL" id="BT002807">
    <property type="protein sequence ID" value="AAO22627.1"/>
    <property type="molecule type" value="mRNA"/>
</dbReference>
<dbReference type="EMBL" id="BT020322">
    <property type="protein sequence ID" value="AAV85677.1"/>
    <property type="molecule type" value="mRNA"/>
</dbReference>
<dbReference type="EMBL" id="BT020554">
    <property type="protein sequence ID" value="AAW70400.1"/>
    <property type="molecule type" value="mRNA"/>
</dbReference>
<dbReference type="EMBL" id="AY086461">
    <property type="protein sequence ID" value="AAM63464.1"/>
    <property type="molecule type" value="mRNA"/>
</dbReference>
<dbReference type="PIR" id="H86324">
    <property type="entry name" value="H86324"/>
</dbReference>
<dbReference type="PIR" id="S46295">
    <property type="entry name" value="S46295"/>
</dbReference>
<dbReference type="RefSeq" id="NP_173349.1">
    <property type="nucleotide sequence ID" value="NM_101773.3"/>
</dbReference>
<dbReference type="PDB" id="7WFD">
    <property type="method" value="EM"/>
    <property type="resolution" value="3.25 A"/>
    <property type="chains" value="A6=1-270"/>
</dbReference>
<dbReference type="PDB" id="7WG5">
    <property type="method" value="EM"/>
    <property type="resolution" value="3.89 A"/>
    <property type="chains" value="A6=1-270"/>
</dbReference>
<dbReference type="PDBsum" id="7WFD"/>
<dbReference type="PDBsum" id="7WG5"/>
<dbReference type="EMDB" id="EMD-32462"/>
<dbReference type="EMDB" id="EMD-32477"/>
<dbReference type="SMR" id="Q8LCQ4"/>
<dbReference type="FunCoup" id="Q8LCQ4">
    <property type="interactions" value="823"/>
</dbReference>
<dbReference type="STRING" id="3702.Q8LCQ4"/>
<dbReference type="iPTMnet" id="Q8LCQ4"/>
<dbReference type="PaxDb" id="3702-AT1G19150.1"/>
<dbReference type="ProteomicsDB" id="238491"/>
<dbReference type="DNASU" id="838498"/>
<dbReference type="EnsemblPlants" id="AT1G19150.1">
    <property type="protein sequence ID" value="AT1G19150.1"/>
    <property type="gene ID" value="AT1G19150"/>
</dbReference>
<dbReference type="GeneID" id="838498"/>
<dbReference type="Gramene" id="AT1G19150.1">
    <property type="protein sequence ID" value="AT1G19150.1"/>
    <property type="gene ID" value="AT1G19150"/>
</dbReference>
<dbReference type="KEGG" id="ath:AT1G19150"/>
<dbReference type="Araport" id="AT1G19150"/>
<dbReference type="TAIR" id="AT1G19150">
    <property type="gene designation" value="LHCA6"/>
</dbReference>
<dbReference type="eggNOG" id="ENOG502QVPT">
    <property type="taxonomic scope" value="Eukaryota"/>
</dbReference>
<dbReference type="HOGENOM" id="CLU_057943_6_1_1"/>
<dbReference type="InParanoid" id="Q8LCQ4"/>
<dbReference type="OMA" id="YPHKVNP"/>
<dbReference type="OrthoDB" id="423598at2759"/>
<dbReference type="PhylomeDB" id="Q8LCQ4"/>
<dbReference type="PRO" id="PR:Q8LCQ4"/>
<dbReference type="Proteomes" id="UP000006548">
    <property type="component" value="Chromosome 1"/>
</dbReference>
<dbReference type="ExpressionAtlas" id="Q8LCQ4">
    <property type="expression patterns" value="baseline and differential"/>
</dbReference>
<dbReference type="GO" id="GO:0009507">
    <property type="term" value="C:chloroplast"/>
    <property type="evidence" value="ECO:0007005"/>
    <property type="project" value="TAIR"/>
</dbReference>
<dbReference type="GO" id="GO:0009535">
    <property type="term" value="C:chloroplast thylakoid membrane"/>
    <property type="evidence" value="ECO:0007669"/>
    <property type="project" value="UniProtKB-SubCell"/>
</dbReference>
<dbReference type="GO" id="GO:0009522">
    <property type="term" value="C:photosystem I"/>
    <property type="evidence" value="ECO:0007669"/>
    <property type="project" value="UniProtKB-KW"/>
</dbReference>
<dbReference type="GO" id="GO:0016168">
    <property type="term" value="F:chlorophyll binding"/>
    <property type="evidence" value="ECO:0007669"/>
    <property type="project" value="UniProtKB-KW"/>
</dbReference>
<dbReference type="GO" id="GO:0046872">
    <property type="term" value="F:metal ion binding"/>
    <property type="evidence" value="ECO:0007669"/>
    <property type="project" value="UniProtKB-KW"/>
</dbReference>
<dbReference type="GO" id="GO:0009768">
    <property type="term" value="P:photosynthesis, light harvesting in photosystem I"/>
    <property type="evidence" value="ECO:0000315"/>
    <property type="project" value="UniProtKB"/>
</dbReference>
<dbReference type="FunFam" id="1.10.3460.10:FF:000002">
    <property type="entry name" value="Chlorophyll a-b binding protein, chloroplastic"/>
    <property type="match status" value="1"/>
</dbReference>
<dbReference type="Gene3D" id="1.10.3460.10">
    <property type="entry name" value="Chlorophyll a/b binding protein domain"/>
    <property type="match status" value="1"/>
</dbReference>
<dbReference type="InterPro" id="IPR001344">
    <property type="entry name" value="Chloro_AB-bd_pln"/>
</dbReference>
<dbReference type="InterPro" id="IPR022796">
    <property type="entry name" value="Chloroa_b-bind"/>
</dbReference>
<dbReference type="PANTHER" id="PTHR21649">
    <property type="entry name" value="CHLOROPHYLL A/B BINDING PROTEIN"/>
    <property type="match status" value="1"/>
</dbReference>
<dbReference type="Pfam" id="PF00504">
    <property type="entry name" value="Chloroa_b-bind"/>
    <property type="match status" value="1"/>
</dbReference>
<dbReference type="SUPFAM" id="SSF103511">
    <property type="entry name" value="Chlorophyll a-b binding protein"/>
    <property type="match status" value="1"/>
</dbReference>
<gene>
    <name evidence="8" type="primary">LHCA6</name>
    <name evidence="11" type="ordered locus">At1g19150</name>
    <name evidence="12" type="ORF">T29M8.2</name>
</gene>
<evidence type="ECO:0000250" key="1">
    <source>
        <dbReference type="UniProtKB" id="P07371"/>
    </source>
</evidence>
<evidence type="ECO:0000250" key="2">
    <source>
        <dbReference type="UniProtKB" id="P12333"/>
    </source>
</evidence>
<evidence type="ECO:0000250" key="3">
    <source>
        <dbReference type="UniProtKB" id="Q9C639"/>
    </source>
</evidence>
<evidence type="ECO:0000255" key="4"/>
<evidence type="ECO:0000256" key="5">
    <source>
        <dbReference type="SAM" id="MobiDB-lite"/>
    </source>
</evidence>
<evidence type="ECO:0000269" key="6">
    <source>
    </source>
</evidence>
<evidence type="ECO:0000269" key="7">
    <source>
    </source>
</evidence>
<evidence type="ECO:0000303" key="8">
    <source>
    </source>
</evidence>
<evidence type="ECO:0000305" key="9"/>
<evidence type="ECO:0000305" key="10">
    <source>
    </source>
</evidence>
<evidence type="ECO:0000312" key="11">
    <source>
        <dbReference type="Araport" id="AT1G19150"/>
    </source>
</evidence>
<evidence type="ECO:0000312" key="12">
    <source>
        <dbReference type="EMBL" id="AAF82226.1"/>
    </source>
</evidence>
<evidence type="ECO:0000312" key="13">
    <source>
        <dbReference type="EMBL" id="AAM63464.1"/>
    </source>
</evidence>
<sequence>MAFAIASALTSTLTLSTSRVQNPTQRRPHVASTSSTGGRLMRERLVVVRAGKEVSSVCEPLPPDRPLWFPGSSPPEWLDGSLPGDFGFDPLGLGSDPDTLKWFAQAELIHSRWAMLAVTGIIIPECLERLGFIENFSWYDAGSREYFADSTTLFVAQMVLMGWAEGRRWADLIKPGSVDIEPKYPHKVNPKPDVGYPGGLWFDFMMWGRGSPEPVMVLRTKEIKNGRLAMLAFLGFCFQATYTSQDPIENLMAHLADPGHCNVFSAFTSH</sequence>
<reference key="1">
    <citation type="journal article" date="1994" name="Plant Mol. Biol.">
        <title>Differential expression in Arabidopsis of Lhca2, a PSI cab gene.</title>
        <authorList>
            <person name="Zhang H."/>
            <person name="Wang J."/>
            <person name="Goodman H.M."/>
        </authorList>
    </citation>
    <scope>NUCLEOTIDE SEQUENCE [MRNA]</scope>
    <source>
        <strain>cv. Columbia</strain>
        <tissue>Leaf</tissue>
    </source>
</reference>
<reference key="2">
    <citation type="journal article" date="2000" name="Nature">
        <title>Sequence and analysis of chromosome 1 of the plant Arabidopsis thaliana.</title>
        <authorList>
            <person name="Theologis A."/>
            <person name="Ecker J.R."/>
            <person name="Palm C.J."/>
            <person name="Federspiel N.A."/>
            <person name="Kaul S."/>
            <person name="White O."/>
            <person name="Alonso J."/>
            <person name="Altafi H."/>
            <person name="Araujo R."/>
            <person name="Bowman C.L."/>
            <person name="Brooks S.Y."/>
            <person name="Buehler E."/>
            <person name="Chan A."/>
            <person name="Chao Q."/>
            <person name="Chen H."/>
            <person name="Cheuk R.F."/>
            <person name="Chin C.W."/>
            <person name="Chung M.K."/>
            <person name="Conn L."/>
            <person name="Conway A.B."/>
            <person name="Conway A.R."/>
            <person name="Creasy T.H."/>
            <person name="Dewar K."/>
            <person name="Dunn P."/>
            <person name="Etgu P."/>
            <person name="Feldblyum T.V."/>
            <person name="Feng J.-D."/>
            <person name="Fong B."/>
            <person name="Fujii C.Y."/>
            <person name="Gill J.E."/>
            <person name="Goldsmith A.D."/>
            <person name="Haas B."/>
            <person name="Hansen N.F."/>
            <person name="Hughes B."/>
            <person name="Huizar L."/>
            <person name="Hunter J.L."/>
            <person name="Jenkins J."/>
            <person name="Johnson-Hopson C."/>
            <person name="Khan S."/>
            <person name="Khaykin E."/>
            <person name="Kim C.J."/>
            <person name="Koo H.L."/>
            <person name="Kremenetskaia I."/>
            <person name="Kurtz D.B."/>
            <person name="Kwan A."/>
            <person name="Lam B."/>
            <person name="Langin-Hooper S."/>
            <person name="Lee A."/>
            <person name="Lee J.M."/>
            <person name="Lenz C.A."/>
            <person name="Li J.H."/>
            <person name="Li Y.-P."/>
            <person name="Lin X."/>
            <person name="Liu S.X."/>
            <person name="Liu Z.A."/>
            <person name="Luros J.S."/>
            <person name="Maiti R."/>
            <person name="Marziali A."/>
            <person name="Militscher J."/>
            <person name="Miranda M."/>
            <person name="Nguyen M."/>
            <person name="Nierman W.C."/>
            <person name="Osborne B.I."/>
            <person name="Pai G."/>
            <person name="Peterson J."/>
            <person name="Pham P.K."/>
            <person name="Rizzo M."/>
            <person name="Rooney T."/>
            <person name="Rowley D."/>
            <person name="Sakano H."/>
            <person name="Salzberg S.L."/>
            <person name="Schwartz J.R."/>
            <person name="Shinn P."/>
            <person name="Southwick A.M."/>
            <person name="Sun H."/>
            <person name="Tallon L.J."/>
            <person name="Tambunga G."/>
            <person name="Toriumi M.J."/>
            <person name="Town C.D."/>
            <person name="Utterback T."/>
            <person name="Van Aken S."/>
            <person name="Vaysberg M."/>
            <person name="Vysotskaia V.S."/>
            <person name="Walker M."/>
            <person name="Wu D."/>
            <person name="Yu G."/>
            <person name="Fraser C.M."/>
            <person name="Venter J.C."/>
            <person name="Davis R.W."/>
        </authorList>
    </citation>
    <scope>NUCLEOTIDE SEQUENCE [LARGE SCALE GENOMIC DNA]</scope>
    <source>
        <strain>cv. Columbia</strain>
    </source>
</reference>
<reference key="3">
    <citation type="journal article" date="2017" name="Plant J.">
        <title>Araport11: a complete reannotation of the Arabidopsis thaliana reference genome.</title>
        <authorList>
            <person name="Cheng C.Y."/>
            <person name="Krishnakumar V."/>
            <person name="Chan A.P."/>
            <person name="Thibaud-Nissen F."/>
            <person name="Schobel S."/>
            <person name="Town C.D."/>
        </authorList>
    </citation>
    <scope>GENOME REANNOTATION</scope>
    <source>
        <strain>cv. Columbia</strain>
    </source>
</reference>
<reference key="4">
    <citation type="journal article" date="2003" name="Science">
        <title>Empirical analysis of transcriptional activity in the Arabidopsis genome.</title>
        <authorList>
            <person name="Yamada K."/>
            <person name="Lim J."/>
            <person name="Dale J.M."/>
            <person name="Chen H."/>
            <person name="Shinn P."/>
            <person name="Palm C.J."/>
            <person name="Southwick A.M."/>
            <person name="Wu H.C."/>
            <person name="Kim C.J."/>
            <person name="Nguyen M."/>
            <person name="Pham P.K."/>
            <person name="Cheuk R.F."/>
            <person name="Karlin-Newmann G."/>
            <person name="Liu S.X."/>
            <person name="Lam B."/>
            <person name="Sakano H."/>
            <person name="Wu T."/>
            <person name="Yu G."/>
            <person name="Miranda M."/>
            <person name="Quach H.L."/>
            <person name="Tripp M."/>
            <person name="Chang C.H."/>
            <person name="Lee J.M."/>
            <person name="Toriumi M.J."/>
            <person name="Chan M.M."/>
            <person name="Tang C.C."/>
            <person name="Onodera C.S."/>
            <person name="Deng J.M."/>
            <person name="Akiyama K."/>
            <person name="Ansari Y."/>
            <person name="Arakawa T."/>
            <person name="Banh J."/>
            <person name="Banno F."/>
            <person name="Bowser L."/>
            <person name="Brooks S.Y."/>
            <person name="Carninci P."/>
            <person name="Chao Q."/>
            <person name="Choy N."/>
            <person name="Enju A."/>
            <person name="Goldsmith A.D."/>
            <person name="Gurjal M."/>
            <person name="Hansen N.F."/>
            <person name="Hayashizaki Y."/>
            <person name="Johnson-Hopson C."/>
            <person name="Hsuan V.W."/>
            <person name="Iida K."/>
            <person name="Karnes M."/>
            <person name="Khan S."/>
            <person name="Koesema E."/>
            <person name="Ishida J."/>
            <person name="Jiang P.X."/>
            <person name="Jones T."/>
            <person name="Kawai J."/>
            <person name="Kamiya A."/>
            <person name="Meyers C."/>
            <person name="Nakajima M."/>
            <person name="Narusaka M."/>
            <person name="Seki M."/>
            <person name="Sakurai T."/>
            <person name="Satou M."/>
            <person name="Tamse R."/>
            <person name="Vaysberg M."/>
            <person name="Wallender E.K."/>
            <person name="Wong C."/>
            <person name="Yamamura Y."/>
            <person name="Yuan S."/>
            <person name="Shinozaki K."/>
            <person name="Davis R.W."/>
            <person name="Theologis A."/>
            <person name="Ecker J.R."/>
        </authorList>
    </citation>
    <scope>NUCLEOTIDE SEQUENCE [LARGE SCALE MRNA]</scope>
    <source>
        <strain>cv. Columbia</strain>
    </source>
</reference>
<reference key="5">
    <citation type="submission" date="2004-12" db="EMBL/GenBank/DDBJ databases">
        <title>Arabidopsis ORF clones.</title>
        <authorList>
            <person name="Kim C.J."/>
            <person name="Chen H."/>
            <person name="Cheuk R.F."/>
            <person name="Shinn P."/>
            <person name="Ecker J.R."/>
        </authorList>
    </citation>
    <scope>NUCLEOTIDE SEQUENCE [LARGE SCALE MRNA]</scope>
    <source>
        <strain>cv. Columbia</strain>
    </source>
</reference>
<reference key="6">
    <citation type="submission" date="2002-03" db="EMBL/GenBank/DDBJ databases">
        <title>Full-length cDNA from Arabidopsis thaliana.</title>
        <authorList>
            <person name="Brover V.V."/>
            <person name="Troukhan M.E."/>
            <person name="Alexandrov N.A."/>
            <person name="Lu Y.-P."/>
            <person name="Flavell R.B."/>
            <person name="Feldmann K.A."/>
        </authorList>
    </citation>
    <scope>NUCLEOTIDE SEQUENCE [LARGE SCALE MRNA]</scope>
</reference>
<reference key="7">
    <citation type="journal article" date="1999" name="Trends Plant Sci.">
        <title>A guide to the Lhc genes and their relatives in Arabidopsis.</title>
        <authorList>
            <person name="Jansson S."/>
        </authorList>
    </citation>
    <scope>GENE FAMILY</scope>
    <scope>NOMENCLATURE</scope>
</reference>
<reference key="8">
    <citation type="journal article" date="2009" name="Plant Cell">
        <title>Efficient operation of NAD(P)H dehydrogenase requires supercomplex formation with photosystem I via minor LHCI in Arabidopsis.</title>
        <authorList>
            <person name="Peng L."/>
            <person name="Fukao Y."/>
            <person name="Fujiwara M."/>
            <person name="Takami T."/>
            <person name="Shikanai T."/>
        </authorList>
    </citation>
    <scope>FUNCTION</scope>
    <scope>DISRUPTION PHENOTYPE</scope>
    <scope>SUBUNIT</scope>
</reference>
<reference key="9">
    <citation type="journal article" date="2011" name="Plant Cell Physiol.">
        <title>Structure of the chloroplast NADH dehydrogenase-like complex: nomenclature for nuclear-encoded subunits.</title>
        <authorList>
            <person name="Ifuku K."/>
            <person name="Endo T."/>
            <person name="Shikanai T."/>
            <person name="Aro E.M."/>
        </authorList>
    </citation>
    <scope>REVIEW ON NDH-PSI SUPERCOMPLEX</scope>
</reference>
<reference key="10">
    <citation type="journal article" date="2011" name="Plant Physiol.">
        <title>Supercomplex formation with photosystem I is required for the stabilization of the chloroplast NADH dehydrogenase-like complex in Arabidopsis.</title>
        <authorList>
            <person name="Peng L."/>
            <person name="Shikanai T."/>
        </authorList>
    </citation>
    <scope>FUNCTION</scope>
    <scope>DISRUPTION PHENOTYPE</scope>
</reference>
<organism evidence="13">
    <name type="scientific">Arabidopsis thaliana</name>
    <name type="common">Mouse-ear cress</name>
    <dbReference type="NCBI Taxonomy" id="3702"/>
    <lineage>
        <taxon>Eukaryota</taxon>
        <taxon>Viridiplantae</taxon>
        <taxon>Streptophyta</taxon>
        <taxon>Embryophyta</taxon>
        <taxon>Tracheophyta</taxon>
        <taxon>Spermatophyta</taxon>
        <taxon>Magnoliopsida</taxon>
        <taxon>eudicotyledons</taxon>
        <taxon>Gunneridae</taxon>
        <taxon>Pentapetalae</taxon>
        <taxon>rosids</taxon>
        <taxon>malvids</taxon>
        <taxon>Brassicales</taxon>
        <taxon>Brassicaceae</taxon>
        <taxon>Camelineae</taxon>
        <taxon>Arabidopsis</taxon>
    </lineage>
</organism>
<feature type="transit peptide" description="Chloroplast" evidence="2">
    <location>
        <begin position="1"/>
        <end position="33"/>
    </location>
</feature>
<feature type="chain" id="PRO_0000435450" description="Photosystem I chlorophyll a/b-binding protein 6, chloroplastic">
    <location>
        <begin position="34"/>
        <end position="270"/>
    </location>
</feature>
<feature type="transmembrane region" description="Helical" evidence="4">
    <location>
        <begin position="146"/>
        <end position="164"/>
    </location>
</feature>
<feature type="transmembrane region" description="Helical" evidence="4">
    <location>
        <begin position="228"/>
        <end position="244"/>
    </location>
</feature>
<feature type="region of interest" description="Disordered" evidence="5">
    <location>
        <begin position="16"/>
        <end position="36"/>
    </location>
</feature>
<feature type="compositionally biased region" description="Polar residues" evidence="5">
    <location>
        <begin position="19"/>
        <end position="36"/>
    </location>
</feature>
<feature type="binding site" description="axial binding residue" evidence="2">
    <location>
        <position position="68"/>
    </location>
    <ligand>
        <name>chlorophyll b</name>
        <dbReference type="ChEBI" id="CHEBI:61721"/>
        <label>1</label>
    </ligand>
    <ligandPart>
        <name>Mg</name>
        <dbReference type="ChEBI" id="CHEBI:25107"/>
    </ligandPart>
</feature>
<feature type="binding site" evidence="1">
    <location>
        <position position="88"/>
    </location>
    <ligand>
        <name>chlorophyll a</name>
        <dbReference type="ChEBI" id="CHEBI:58416"/>
        <label>1</label>
    </ligand>
</feature>
<feature type="binding site" description="axial binding residue" evidence="2">
    <location>
        <position position="107"/>
    </location>
    <ligand>
        <name>chlorophyll a</name>
        <dbReference type="ChEBI" id="CHEBI:58416"/>
        <label>1</label>
    </ligand>
    <ligandPart>
        <name>Mg</name>
        <dbReference type="ChEBI" id="CHEBI:25107"/>
    </ligandPart>
</feature>
<feature type="binding site" evidence="1">
    <location>
        <position position="112"/>
    </location>
    <ligand>
        <name>chlorophyll b</name>
        <dbReference type="ChEBI" id="CHEBI:61721"/>
        <label>2</label>
    </ligand>
</feature>
<feature type="binding site" description="axial binding residue" evidence="2">
    <location>
        <position position="165"/>
    </location>
    <ligand>
        <name>chlorophyll b</name>
        <dbReference type="ChEBI" id="CHEBI:61721"/>
        <label>3</label>
    </ligand>
    <ligandPart>
        <name>Mg</name>
        <dbReference type="ChEBI" id="CHEBI:25107"/>
    </ligandPart>
</feature>
<feature type="binding site" evidence="1">
    <location>
        <position position="168"/>
    </location>
    <ligand>
        <name>chlorophyll b</name>
        <dbReference type="ChEBI" id="CHEBI:61721"/>
        <label>4</label>
    </ligand>
</feature>
<feature type="binding site" evidence="1">
    <location>
        <position position="221"/>
    </location>
    <ligand>
        <name>chlorophyll a</name>
        <dbReference type="ChEBI" id="CHEBI:58416"/>
        <label>5</label>
    </ligand>
</feature>
<feature type="binding site" description="axial binding residue" evidence="2">
    <location>
        <position position="222"/>
    </location>
    <ligand>
        <name>chlorophyll a</name>
        <dbReference type="ChEBI" id="CHEBI:58416"/>
        <label>3</label>
    </ligand>
    <ligandPart>
        <name>Mg</name>
        <dbReference type="ChEBI" id="CHEBI:25107"/>
    </ligandPart>
</feature>
<feature type="binding site" description="axial binding residue" evidence="2">
    <location>
        <position position="225"/>
    </location>
    <ligand>
        <name>chlorophyll a</name>
        <dbReference type="ChEBI" id="CHEBI:58416"/>
        <label>4</label>
    </ligand>
    <ligandPart>
        <name>Mg</name>
        <dbReference type="ChEBI" id="CHEBI:25107"/>
    </ligandPart>
</feature>
<feature type="binding site" evidence="1">
    <location>
        <position position="227"/>
    </location>
    <ligand>
        <name>chlorophyll a</name>
        <dbReference type="ChEBI" id="CHEBI:58416"/>
        <label>1</label>
    </ligand>
</feature>
<feature type="binding site" description="axial binding residue" evidence="2">
    <location>
        <position position="239"/>
    </location>
    <ligand>
        <name>chlorophyll a</name>
        <dbReference type="ChEBI" id="CHEBI:58416"/>
        <label>5</label>
    </ligand>
    <ligandPart>
        <name>Mg</name>
        <dbReference type="ChEBI" id="CHEBI:25107"/>
    </ligandPart>
</feature>
<feature type="binding site" description="axial binding residue" evidence="2">
    <location>
        <position position="254"/>
    </location>
    <ligand>
        <name>chlorophyll a</name>
        <dbReference type="ChEBI" id="CHEBI:58416"/>
        <label>6</label>
    </ligand>
    <ligandPart>
        <name>Mg</name>
        <dbReference type="ChEBI" id="CHEBI:25107"/>
    </ligandPart>
</feature>
<feature type="sequence conflict" description="In Ref. 4; AAO22627." evidence="9" ref="4">
    <original>Q</original>
    <variation>K</variation>
    <location>
        <position position="21"/>
    </location>
</feature>
<feature type="sequence conflict" description="In Ref. 1; AAA57542." evidence="9" ref="1">
    <original>H</original>
    <variation>HV</variation>
    <location>
        <position position="29"/>
    </location>
</feature>
<feature type="sequence conflict" description="In Ref. 1; AAA57542." evidence="9" ref="1">
    <original>LWFPGSSPPE</original>
    <variation>YGSLVALHLN</variation>
    <location>
        <begin position="67"/>
        <end position="76"/>
    </location>
</feature>
<feature type="sequence conflict" description="In Ref. 1; AAA57542." evidence="9" ref="1">
    <original>L</original>
    <variation>F</variation>
    <location>
        <position position="91"/>
    </location>
</feature>
<feature type="sequence conflict" description="In Ref. 1; AAA57542." evidence="9" ref="1">
    <original>V</original>
    <variation>A</variation>
    <location>
        <position position="194"/>
    </location>
</feature>
<comment type="function">
    <text evidence="6 7 10">The light-harvesting complex (LHC) functions as a light receptor, it captures and delivers excitation energy to photosystems with which it is closely associated. Seems involved in the function of the photosystem I in low light conditions, when other LHCA proteins are less abundant. Required, together with LHCA5, for the formation of a full-size NAD(P)H dehydrogenase-photosystem I supercomplex (NDH-PSI) that triggers cyclic and chlororespiratory electron transport in chloroplast thylakoids, especially under stress conditions (e.g. increased light intensity).</text>
</comment>
<comment type="cofactor">
    <text evidence="3">Binds at least 14 chlorophylls (8 Chl-a and 6 Chl-b) and carotenoids such as lutein and neoxanthin.</text>
</comment>
<comment type="subunit">
    <text evidence="3 6">The LHC complex consists of chlorophyll a-b binding proteins (PubMed:19903870). Homodimer. Binds pigments (By similarity). Element of the NAD(P)H dehydrogenase-photosystem I supercomplex (NDH-PSI) (PubMed:19903870).</text>
</comment>
<comment type="subcellular location">
    <subcellularLocation>
        <location evidence="3">Plastid</location>
        <location evidence="3">Chloroplast thylakoid membrane</location>
        <topology evidence="4">Multi-pass membrane protein</topology>
    </subcellularLocation>
</comment>
<comment type="domain">
    <text evidence="3">The N-terminus of the protein extends into the stroma where it is involved with adhesion of granal membranes and post-translational modifications; both are believed to mediate the distribution of excitation energy between photosystems I and II.</text>
</comment>
<comment type="PTM">
    <text evidence="2">Photoregulated by reversible phosphorylation of its threonine residues.</text>
</comment>
<comment type="disruption phenotype">
    <text evidence="6 7">Slightly lower NDH activity in immature leaves. No chlorophyll fluorescence increase in mature leaves. Smaller version of the NAD(P)H dehydrogenase-photosystem I supercomplex (NDH-PSI) supercomplex (PubMed:19903870). In the double mutant lhca5 lhca6, drastic reduction of NDH subunits accumulation upon increased light intensity (PubMed:21278308).</text>
</comment>
<comment type="similarity">
    <text evidence="9">Belongs to the light-harvesting chlorophyll a/b-binding (LHC) protein family.</text>
</comment>
<comment type="sequence caution" evidence="9">
    <conflict type="erroneous gene model prediction">
        <sequence resource="EMBL-CDS" id="AAF82226"/>
    </conflict>
</comment>